<dbReference type="EMBL" id="BA000011">
    <property type="protein sequence ID" value="BAB59295.1"/>
    <property type="molecule type" value="Genomic_DNA"/>
</dbReference>
<dbReference type="SMR" id="Q97CE8"/>
<dbReference type="STRING" id="273116.gene:9380923"/>
<dbReference type="PaxDb" id="273116-14324367"/>
<dbReference type="KEGG" id="tvo:TVG0162980"/>
<dbReference type="eggNOG" id="arCOG04272">
    <property type="taxonomic scope" value="Archaea"/>
</dbReference>
<dbReference type="HOGENOM" id="CLU_053134_0_0_2"/>
<dbReference type="PhylomeDB" id="Q97CE8"/>
<dbReference type="Proteomes" id="UP000001017">
    <property type="component" value="Chromosome"/>
</dbReference>
<dbReference type="GO" id="GO:0008939">
    <property type="term" value="F:nicotinate-nucleotide-dimethylbenzimidazole phosphoribosyltransferase activity"/>
    <property type="evidence" value="ECO:0007669"/>
    <property type="project" value="InterPro"/>
</dbReference>
<dbReference type="CDD" id="cd02439">
    <property type="entry name" value="DMB-PRT_CobT"/>
    <property type="match status" value="1"/>
</dbReference>
<dbReference type="Gene3D" id="3.40.50.10210">
    <property type="match status" value="1"/>
</dbReference>
<dbReference type="HAMAP" id="MF_01086">
    <property type="entry name" value="UPF0284"/>
    <property type="match status" value="1"/>
</dbReference>
<dbReference type="InterPro" id="IPR003200">
    <property type="entry name" value="Nict_dMeBzImd_PRibTrfase"/>
</dbReference>
<dbReference type="InterPro" id="IPR002805">
    <property type="entry name" value="Nict_dMeBzImd_PRibTrfase_arc"/>
</dbReference>
<dbReference type="InterPro" id="IPR036087">
    <property type="entry name" value="Nict_dMeBzImd_PRibTrfase_sf"/>
</dbReference>
<dbReference type="NCBIfam" id="NF003372">
    <property type="entry name" value="PRK04447.1-5"/>
    <property type="match status" value="1"/>
</dbReference>
<dbReference type="PANTHER" id="PTHR38811">
    <property type="match status" value="1"/>
</dbReference>
<dbReference type="PANTHER" id="PTHR38811:SF1">
    <property type="entry name" value="UPF0284 PROTEIN SLL1500"/>
    <property type="match status" value="1"/>
</dbReference>
<dbReference type="SUPFAM" id="SSF52733">
    <property type="entry name" value="Nicotinate mononucleotide:5,6-dimethylbenzimidazole phosphoribosyltransferase (CobT)"/>
    <property type="match status" value="1"/>
</dbReference>
<reference key="1">
    <citation type="journal article" date="2000" name="Proc. Natl. Acad. Sci. U.S.A.">
        <title>Archaeal adaptation to higher temperatures revealed by genomic sequence of Thermoplasma volcanium.</title>
        <authorList>
            <person name="Kawashima T."/>
            <person name="Amano N."/>
            <person name="Koike H."/>
            <person name="Makino S."/>
            <person name="Higuchi S."/>
            <person name="Kawashima-Ohya Y."/>
            <person name="Watanabe K."/>
            <person name="Yamazaki M."/>
            <person name="Kanehori K."/>
            <person name="Kawamoto T."/>
            <person name="Nunoshiba T."/>
            <person name="Yamamoto Y."/>
            <person name="Aramaki H."/>
            <person name="Makino K."/>
            <person name="Suzuki M."/>
        </authorList>
    </citation>
    <scope>NUCLEOTIDE SEQUENCE [LARGE SCALE GENOMIC DNA]</scope>
    <source>
        <strain>ATCC 51530 / DSM 4299 / JCM 9571 / NBRC 15438 / GSS1</strain>
    </source>
</reference>
<sequence>MEDIIFGKRSNVFDVNPENTVFVLIAGTSEVSTVPGITSAGATPELTRLTPAIDSEIIGEGKCLSSKDPPMTPEGIPTPAIVTKAILSLTNIRYIIVNGGFYAKPKTPFIETGLKPSNNPAVKTAIEDLDAAIHAGEHIGRLLDGVFENIILAESVPGGTTTAYAVLKAIGINAKTSSSMKEDPFSIKEKIAEMSFRRKLEKSPLGAVKEYGDNMMAVSLGISSSVKRSKIIFGGGTQMATVMYLDRLINGMRDRYISTTGWVYYHRTELFSDLGLSDYLAVSAMDFSGMKHPGLRYYQYGHVREGTGMGAAFLLARLMNFEAEAIYKSVDDFYEQFI</sequence>
<comment type="similarity">
    <text evidence="1">Belongs to the UPF0284 family.</text>
</comment>
<evidence type="ECO:0000255" key="1">
    <source>
        <dbReference type="HAMAP-Rule" id="MF_01086"/>
    </source>
</evidence>
<accession>Q97CE8</accession>
<name>Y153_THEVO</name>
<gene>
    <name type="ordered locus">TV0153</name>
    <name type="ORF">TVG0162980</name>
</gene>
<organism>
    <name type="scientific">Thermoplasma volcanium (strain ATCC 51530 / DSM 4299 / JCM 9571 / NBRC 15438 / GSS1)</name>
    <dbReference type="NCBI Taxonomy" id="273116"/>
    <lineage>
        <taxon>Archaea</taxon>
        <taxon>Methanobacteriati</taxon>
        <taxon>Thermoplasmatota</taxon>
        <taxon>Thermoplasmata</taxon>
        <taxon>Thermoplasmatales</taxon>
        <taxon>Thermoplasmataceae</taxon>
        <taxon>Thermoplasma</taxon>
    </lineage>
</organism>
<protein>
    <recommendedName>
        <fullName evidence="1">UPF0284 protein TV0153</fullName>
    </recommendedName>
</protein>
<feature type="chain" id="PRO_0000151064" description="UPF0284 protein TV0153">
    <location>
        <begin position="1"/>
        <end position="338"/>
    </location>
</feature>
<proteinExistence type="inferred from homology"/>